<name>PPNP_PSEPK</name>
<proteinExistence type="inferred from homology"/>
<accession>Q88F51</accession>
<feature type="chain" id="PRO_0000211774" description="Pyrimidine/purine nucleoside phosphorylase">
    <location>
        <begin position="1"/>
        <end position="94"/>
    </location>
</feature>
<comment type="function">
    <text evidence="1">Catalyzes the phosphorolysis of diverse nucleosides, yielding D-ribose 1-phosphate and the respective free bases. Can use uridine, adenosine, guanosine, cytidine, thymidine, inosine and xanthosine as substrates. Also catalyzes the reverse reactions.</text>
</comment>
<comment type="catalytic activity">
    <reaction evidence="1">
        <text>a purine D-ribonucleoside + phosphate = a purine nucleobase + alpha-D-ribose 1-phosphate</text>
        <dbReference type="Rhea" id="RHEA:19805"/>
        <dbReference type="ChEBI" id="CHEBI:26386"/>
        <dbReference type="ChEBI" id="CHEBI:43474"/>
        <dbReference type="ChEBI" id="CHEBI:57720"/>
        <dbReference type="ChEBI" id="CHEBI:142355"/>
        <dbReference type="EC" id="2.4.2.1"/>
    </reaction>
</comment>
<comment type="catalytic activity">
    <reaction evidence="1">
        <text>adenosine + phosphate = alpha-D-ribose 1-phosphate + adenine</text>
        <dbReference type="Rhea" id="RHEA:27642"/>
        <dbReference type="ChEBI" id="CHEBI:16335"/>
        <dbReference type="ChEBI" id="CHEBI:16708"/>
        <dbReference type="ChEBI" id="CHEBI:43474"/>
        <dbReference type="ChEBI" id="CHEBI:57720"/>
        <dbReference type="EC" id="2.4.2.1"/>
    </reaction>
</comment>
<comment type="catalytic activity">
    <reaction evidence="1">
        <text>cytidine + phosphate = cytosine + alpha-D-ribose 1-phosphate</text>
        <dbReference type="Rhea" id="RHEA:52540"/>
        <dbReference type="ChEBI" id="CHEBI:16040"/>
        <dbReference type="ChEBI" id="CHEBI:17562"/>
        <dbReference type="ChEBI" id="CHEBI:43474"/>
        <dbReference type="ChEBI" id="CHEBI:57720"/>
        <dbReference type="EC" id="2.4.2.2"/>
    </reaction>
</comment>
<comment type="catalytic activity">
    <reaction evidence="1">
        <text>guanosine + phosphate = alpha-D-ribose 1-phosphate + guanine</text>
        <dbReference type="Rhea" id="RHEA:13233"/>
        <dbReference type="ChEBI" id="CHEBI:16235"/>
        <dbReference type="ChEBI" id="CHEBI:16750"/>
        <dbReference type="ChEBI" id="CHEBI:43474"/>
        <dbReference type="ChEBI" id="CHEBI:57720"/>
        <dbReference type="EC" id="2.4.2.1"/>
    </reaction>
</comment>
<comment type="catalytic activity">
    <reaction evidence="1">
        <text>inosine + phosphate = alpha-D-ribose 1-phosphate + hypoxanthine</text>
        <dbReference type="Rhea" id="RHEA:27646"/>
        <dbReference type="ChEBI" id="CHEBI:17368"/>
        <dbReference type="ChEBI" id="CHEBI:17596"/>
        <dbReference type="ChEBI" id="CHEBI:43474"/>
        <dbReference type="ChEBI" id="CHEBI:57720"/>
        <dbReference type="EC" id="2.4.2.1"/>
    </reaction>
</comment>
<comment type="catalytic activity">
    <reaction evidence="1">
        <text>thymidine + phosphate = 2-deoxy-alpha-D-ribose 1-phosphate + thymine</text>
        <dbReference type="Rhea" id="RHEA:16037"/>
        <dbReference type="ChEBI" id="CHEBI:17748"/>
        <dbReference type="ChEBI" id="CHEBI:17821"/>
        <dbReference type="ChEBI" id="CHEBI:43474"/>
        <dbReference type="ChEBI" id="CHEBI:57259"/>
        <dbReference type="EC" id="2.4.2.2"/>
    </reaction>
</comment>
<comment type="catalytic activity">
    <reaction evidence="1">
        <text>uridine + phosphate = alpha-D-ribose 1-phosphate + uracil</text>
        <dbReference type="Rhea" id="RHEA:24388"/>
        <dbReference type="ChEBI" id="CHEBI:16704"/>
        <dbReference type="ChEBI" id="CHEBI:17568"/>
        <dbReference type="ChEBI" id="CHEBI:43474"/>
        <dbReference type="ChEBI" id="CHEBI:57720"/>
        <dbReference type="EC" id="2.4.2.2"/>
    </reaction>
</comment>
<comment type="catalytic activity">
    <reaction evidence="1">
        <text>xanthosine + phosphate = alpha-D-ribose 1-phosphate + xanthine</text>
        <dbReference type="Rhea" id="RHEA:27638"/>
        <dbReference type="ChEBI" id="CHEBI:17712"/>
        <dbReference type="ChEBI" id="CHEBI:18107"/>
        <dbReference type="ChEBI" id="CHEBI:43474"/>
        <dbReference type="ChEBI" id="CHEBI:57720"/>
        <dbReference type="EC" id="2.4.2.1"/>
    </reaction>
</comment>
<comment type="similarity">
    <text evidence="1">Belongs to the nucleoside phosphorylase PpnP family.</text>
</comment>
<gene>
    <name evidence="1" type="primary">ppnP</name>
    <name type="ordered locus">PP_4248</name>
</gene>
<reference key="1">
    <citation type="journal article" date="2002" name="Environ. Microbiol.">
        <title>Complete genome sequence and comparative analysis of the metabolically versatile Pseudomonas putida KT2440.</title>
        <authorList>
            <person name="Nelson K.E."/>
            <person name="Weinel C."/>
            <person name="Paulsen I.T."/>
            <person name="Dodson R.J."/>
            <person name="Hilbert H."/>
            <person name="Martins dos Santos V.A.P."/>
            <person name="Fouts D.E."/>
            <person name="Gill S.R."/>
            <person name="Pop M."/>
            <person name="Holmes M."/>
            <person name="Brinkac L.M."/>
            <person name="Beanan M.J."/>
            <person name="DeBoy R.T."/>
            <person name="Daugherty S.C."/>
            <person name="Kolonay J.F."/>
            <person name="Madupu R."/>
            <person name="Nelson W.C."/>
            <person name="White O."/>
            <person name="Peterson J.D."/>
            <person name="Khouri H.M."/>
            <person name="Hance I."/>
            <person name="Chris Lee P."/>
            <person name="Holtzapple E.K."/>
            <person name="Scanlan D."/>
            <person name="Tran K."/>
            <person name="Moazzez A."/>
            <person name="Utterback T.R."/>
            <person name="Rizzo M."/>
            <person name="Lee K."/>
            <person name="Kosack D."/>
            <person name="Moestl D."/>
            <person name="Wedler H."/>
            <person name="Lauber J."/>
            <person name="Stjepandic D."/>
            <person name="Hoheisel J."/>
            <person name="Straetz M."/>
            <person name="Heim S."/>
            <person name="Kiewitz C."/>
            <person name="Eisen J.A."/>
            <person name="Timmis K.N."/>
            <person name="Duesterhoeft A."/>
            <person name="Tuemmler B."/>
            <person name="Fraser C.M."/>
        </authorList>
    </citation>
    <scope>NUCLEOTIDE SEQUENCE [LARGE SCALE GENOMIC DNA]</scope>
    <source>
        <strain>ATCC 47054 / DSM 6125 / CFBP 8728 / NCIMB 11950 / KT2440</strain>
    </source>
</reference>
<protein>
    <recommendedName>
        <fullName evidence="1">Pyrimidine/purine nucleoside phosphorylase</fullName>
        <ecNumber evidence="1">2.4.2.1</ecNumber>
        <ecNumber evidence="1">2.4.2.2</ecNumber>
    </recommendedName>
    <alternativeName>
        <fullName evidence="1">Adenosine phosphorylase</fullName>
    </alternativeName>
    <alternativeName>
        <fullName evidence="1">Cytidine phosphorylase</fullName>
    </alternativeName>
    <alternativeName>
        <fullName evidence="1">Guanosine phosphorylase</fullName>
    </alternativeName>
    <alternativeName>
        <fullName evidence="1">Inosine phosphorylase</fullName>
    </alternativeName>
    <alternativeName>
        <fullName evidence="1">Thymidine phosphorylase</fullName>
    </alternativeName>
    <alternativeName>
        <fullName evidence="1">Uridine phosphorylase</fullName>
    </alternativeName>
    <alternativeName>
        <fullName evidence="1">Xanthosine phosphorylase</fullName>
    </alternativeName>
</protein>
<organism>
    <name type="scientific">Pseudomonas putida (strain ATCC 47054 / DSM 6125 / CFBP 8728 / NCIMB 11950 / KT2440)</name>
    <dbReference type="NCBI Taxonomy" id="160488"/>
    <lineage>
        <taxon>Bacteria</taxon>
        <taxon>Pseudomonadati</taxon>
        <taxon>Pseudomonadota</taxon>
        <taxon>Gammaproteobacteria</taxon>
        <taxon>Pseudomonadales</taxon>
        <taxon>Pseudomonadaceae</taxon>
        <taxon>Pseudomonas</taxon>
    </lineage>
</organism>
<dbReference type="EC" id="2.4.2.1" evidence="1"/>
<dbReference type="EC" id="2.4.2.2" evidence="1"/>
<dbReference type="EMBL" id="AE015451">
    <property type="protein sequence ID" value="AAN69828.1"/>
    <property type="molecule type" value="Genomic_DNA"/>
</dbReference>
<dbReference type="RefSeq" id="NP_746364.1">
    <property type="nucleotide sequence ID" value="NC_002947.4"/>
</dbReference>
<dbReference type="RefSeq" id="WP_003254278.1">
    <property type="nucleotide sequence ID" value="NZ_CP169744.1"/>
</dbReference>
<dbReference type="SMR" id="Q88F51"/>
<dbReference type="STRING" id="160488.PP_4248"/>
<dbReference type="PaxDb" id="160488-PP_4248"/>
<dbReference type="KEGG" id="ppu:PP_4248"/>
<dbReference type="PATRIC" id="fig|160488.4.peg.4517"/>
<dbReference type="eggNOG" id="COG3123">
    <property type="taxonomic scope" value="Bacteria"/>
</dbReference>
<dbReference type="HOGENOM" id="CLU_157874_0_0_6"/>
<dbReference type="OrthoDB" id="9793848at2"/>
<dbReference type="PhylomeDB" id="Q88F51"/>
<dbReference type="BioCyc" id="PPUT160488:G1G01-4521-MONOMER"/>
<dbReference type="Proteomes" id="UP000000556">
    <property type="component" value="Chromosome"/>
</dbReference>
<dbReference type="GO" id="GO:0005829">
    <property type="term" value="C:cytosol"/>
    <property type="evidence" value="ECO:0007669"/>
    <property type="project" value="TreeGrafter"/>
</dbReference>
<dbReference type="GO" id="GO:0047975">
    <property type="term" value="F:guanosine phosphorylase activity"/>
    <property type="evidence" value="ECO:0007669"/>
    <property type="project" value="UniProtKB-EC"/>
</dbReference>
<dbReference type="GO" id="GO:0004731">
    <property type="term" value="F:purine-nucleoside phosphorylase activity"/>
    <property type="evidence" value="ECO:0007669"/>
    <property type="project" value="UniProtKB-UniRule"/>
</dbReference>
<dbReference type="GO" id="GO:0009032">
    <property type="term" value="F:thymidine phosphorylase activity"/>
    <property type="evidence" value="ECO:0007669"/>
    <property type="project" value="UniProtKB-EC"/>
</dbReference>
<dbReference type="GO" id="GO:0004850">
    <property type="term" value="F:uridine phosphorylase activity"/>
    <property type="evidence" value="ECO:0007669"/>
    <property type="project" value="UniProtKB-EC"/>
</dbReference>
<dbReference type="CDD" id="cd20296">
    <property type="entry name" value="cupin_PpnP-like"/>
    <property type="match status" value="1"/>
</dbReference>
<dbReference type="FunFam" id="2.60.120.10:FF:000016">
    <property type="entry name" value="Pyrimidine/purine nucleoside phosphorylase"/>
    <property type="match status" value="1"/>
</dbReference>
<dbReference type="Gene3D" id="2.60.120.10">
    <property type="entry name" value="Jelly Rolls"/>
    <property type="match status" value="1"/>
</dbReference>
<dbReference type="HAMAP" id="MF_01537">
    <property type="entry name" value="Nucleos_phosphorylase_PpnP"/>
    <property type="match status" value="1"/>
</dbReference>
<dbReference type="InterPro" id="IPR009664">
    <property type="entry name" value="Ppnp"/>
</dbReference>
<dbReference type="InterPro" id="IPR014710">
    <property type="entry name" value="RmlC-like_jellyroll"/>
</dbReference>
<dbReference type="InterPro" id="IPR011051">
    <property type="entry name" value="RmlC_Cupin_sf"/>
</dbReference>
<dbReference type="PANTHER" id="PTHR36540">
    <property type="entry name" value="PYRIMIDINE/PURINE NUCLEOSIDE PHOSPHORYLASE"/>
    <property type="match status" value="1"/>
</dbReference>
<dbReference type="PANTHER" id="PTHR36540:SF1">
    <property type="entry name" value="PYRIMIDINE_PURINE NUCLEOSIDE PHOSPHORYLASE"/>
    <property type="match status" value="1"/>
</dbReference>
<dbReference type="Pfam" id="PF06865">
    <property type="entry name" value="Ppnp"/>
    <property type="match status" value="1"/>
</dbReference>
<dbReference type="SUPFAM" id="SSF51182">
    <property type="entry name" value="RmlC-like cupins"/>
    <property type="match status" value="1"/>
</dbReference>
<sequence>MFQVNEYFNGTVKSIAFSGEEGPATVGVMAPGEYEFGTAKREIMHVVSGALTVKLPGSDNWETFNAGDKFNVPADSKFQLQVKVDTAYLCEYRD</sequence>
<evidence type="ECO:0000255" key="1">
    <source>
        <dbReference type="HAMAP-Rule" id="MF_01537"/>
    </source>
</evidence>
<keyword id="KW-0328">Glycosyltransferase</keyword>
<keyword id="KW-1185">Reference proteome</keyword>
<keyword id="KW-0808">Transferase</keyword>